<comment type="function">
    <text evidence="1">Catalyzes the synthesis of beta-nicotinate D-ribonucleotide from nicotinate and 5-phospho-D-ribose 1-phosphate at the expense of ATP.</text>
</comment>
<comment type="catalytic activity">
    <reaction evidence="1">
        <text>nicotinate + 5-phospho-alpha-D-ribose 1-diphosphate + ATP + H2O = nicotinate beta-D-ribonucleotide + ADP + phosphate + diphosphate</text>
        <dbReference type="Rhea" id="RHEA:36163"/>
        <dbReference type="ChEBI" id="CHEBI:15377"/>
        <dbReference type="ChEBI" id="CHEBI:30616"/>
        <dbReference type="ChEBI" id="CHEBI:32544"/>
        <dbReference type="ChEBI" id="CHEBI:33019"/>
        <dbReference type="ChEBI" id="CHEBI:43474"/>
        <dbReference type="ChEBI" id="CHEBI:57502"/>
        <dbReference type="ChEBI" id="CHEBI:58017"/>
        <dbReference type="ChEBI" id="CHEBI:456216"/>
        <dbReference type="EC" id="6.3.4.21"/>
    </reaction>
</comment>
<comment type="pathway">
    <text evidence="1">Cofactor biosynthesis; NAD(+) biosynthesis; nicotinate D-ribonucleotide from nicotinate: step 1/1.</text>
</comment>
<comment type="PTM">
    <text evidence="1">Transiently phosphorylated on a His residue during the reaction cycle. Phosphorylation strongly increases the affinity for substrates and increases the rate of nicotinate D-ribonucleotide production. Dephosphorylation regenerates the low-affinity form of the enzyme, leading to product release.</text>
</comment>
<comment type="similarity">
    <text evidence="1">Belongs to the NAPRTase family.</text>
</comment>
<reference key="1">
    <citation type="journal article" date="2008" name="DNA Res.">
        <title>Complete genome sequence and comparative analysis of the wild-type commensal Escherichia coli strain SE11 isolated from a healthy adult.</title>
        <authorList>
            <person name="Oshima K."/>
            <person name="Toh H."/>
            <person name="Ogura Y."/>
            <person name="Sasamoto H."/>
            <person name="Morita H."/>
            <person name="Park S.-H."/>
            <person name="Ooka T."/>
            <person name="Iyoda S."/>
            <person name="Taylor T.D."/>
            <person name="Hayashi T."/>
            <person name="Itoh K."/>
            <person name="Hattori M."/>
        </authorList>
    </citation>
    <scope>NUCLEOTIDE SEQUENCE [LARGE SCALE GENOMIC DNA]</scope>
    <source>
        <strain>SE11</strain>
    </source>
</reference>
<name>PNCB_ECOSE</name>
<keyword id="KW-0436">Ligase</keyword>
<keyword id="KW-0597">Phosphoprotein</keyword>
<keyword id="KW-0662">Pyridine nucleotide biosynthesis</keyword>
<accession>B6I904</accession>
<proteinExistence type="inferred from homology"/>
<organism>
    <name type="scientific">Escherichia coli (strain SE11)</name>
    <dbReference type="NCBI Taxonomy" id="409438"/>
    <lineage>
        <taxon>Bacteria</taxon>
        <taxon>Pseudomonadati</taxon>
        <taxon>Pseudomonadota</taxon>
        <taxon>Gammaproteobacteria</taxon>
        <taxon>Enterobacterales</taxon>
        <taxon>Enterobacteriaceae</taxon>
        <taxon>Escherichia</taxon>
    </lineage>
</organism>
<feature type="chain" id="PRO_1000129471" description="Nicotinate phosphoribosyltransferase">
    <location>
        <begin position="1"/>
        <end position="400"/>
    </location>
</feature>
<feature type="modified residue" description="Phosphohistidine; by autocatalysis" evidence="1">
    <location>
        <position position="220"/>
    </location>
</feature>
<protein>
    <recommendedName>
        <fullName evidence="1">Nicotinate phosphoribosyltransferase</fullName>
        <shortName evidence="1">NAPRTase</shortName>
        <ecNumber evidence="1">6.3.4.21</ecNumber>
    </recommendedName>
</protein>
<evidence type="ECO:0000255" key="1">
    <source>
        <dbReference type="HAMAP-Rule" id="MF_00570"/>
    </source>
</evidence>
<dbReference type="EC" id="6.3.4.21" evidence="1"/>
<dbReference type="EMBL" id="AP009240">
    <property type="protein sequence ID" value="BAG76515.1"/>
    <property type="molecule type" value="Genomic_DNA"/>
</dbReference>
<dbReference type="RefSeq" id="WP_001297200.1">
    <property type="nucleotide sequence ID" value="NC_011415.1"/>
</dbReference>
<dbReference type="SMR" id="B6I904"/>
<dbReference type="GeneID" id="93776483"/>
<dbReference type="KEGG" id="ecy:ECSE_0991"/>
<dbReference type="HOGENOM" id="CLU_030991_1_0_6"/>
<dbReference type="UniPathway" id="UPA00253">
    <property type="reaction ID" value="UER00457"/>
</dbReference>
<dbReference type="Proteomes" id="UP000008199">
    <property type="component" value="Chromosome"/>
</dbReference>
<dbReference type="GO" id="GO:0005829">
    <property type="term" value="C:cytosol"/>
    <property type="evidence" value="ECO:0007669"/>
    <property type="project" value="TreeGrafter"/>
</dbReference>
<dbReference type="GO" id="GO:0004516">
    <property type="term" value="F:nicotinate phosphoribosyltransferase activity"/>
    <property type="evidence" value="ECO:0007669"/>
    <property type="project" value="UniProtKB-UniRule"/>
</dbReference>
<dbReference type="GO" id="GO:0034355">
    <property type="term" value="P:NAD biosynthetic process via the salvage pathway"/>
    <property type="evidence" value="ECO:0007669"/>
    <property type="project" value="TreeGrafter"/>
</dbReference>
<dbReference type="CDD" id="cd01401">
    <property type="entry name" value="PncB_like"/>
    <property type="match status" value="1"/>
</dbReference>
<dbReference type="FunFam" id="3.20.140.10:FF:000001">
    <property type="entry name" value="Nicotinate phosphoribosyltransferase"/>
    <property type="match status" value="1"/>
</dbReference>
<dbReference type="Gene3D" id="3.20.140.10">
    <property type="entry name" value="nicotinate phosphoribosyltransferase"/>
    <property type="match status" value="1"/>
</dbReference>
<dbReference type="HAMAP" id="MF_00570">
    <property type="entry name" value="NAPRTase"/>
    <property type="match status" value="1"/>
</dbReference>
<dbReference type="InterPro" id="IPR041525">
    <property type="entry name" value="N/Namide_PRibTrfase"/>
</dbReference>
<dbReference type="InterPro" id="IPR040727">
    <property type="entry name" value="NAPRTase_N"/>
</dbReference>
<dbReference type="InterPro" id="IPR006406">
    <property type="entry name" value="Nic_PRibTrfase"/>
</dbReference>
<dbReference type="InterPro" id="IPR007229">
    <property type="entry name" value="Nic_PRibTrfase-Fam"/>
</dbReference>
<dbReference type="InterPro" id="IPR036068">
    <property type="entry name" value="Nicotinate_pribotase-like_C"/>
</dbReference>
<dbReference type="NCBIfam" id="TIGR01514">
    <property type="entry name" value="NAPRTase"/>
    <property type="match status" value="1"/>
</dbReference>
<dbReference type="NCBIfam" id="NF003704">
    <property type="entry name" value="PRK05321.1"/>
    <property type="match status" value="1"/>
</dbReference>
<dbReference type="PANTHER" id="PTHR11098">
    <property type="entry name" value="NICOTINATE PHOSPHORIBOSYLTRANSFERASE"/>
    <property type="match status" value="1"/>
</dbReference>
<dbReference type="PANTHER" id="PTHR11098:SF1">
    <property type="entry name" value="NICOTINATE PHOSPHORIBOSYLTRANSFERASE"/>
    <property type="match status" value="1"/>
</dbReference>
<dbReference type="Pfam" id="PF04095">
    <property type="entry name" value="NAPRTase"/>
    <property type="match status" value="1"/>
</dbReference>
<dbReference type="Pfam" id="PF17767">
    <property type="entry name" value="NAPRTase_N"/>
    <property type="match status" value="1"/>
</dbReference>
<dbReference type="PIRSF" id="PIRSF000484">
    <property type="entry name" value="NAPRT"/>
    <property type="match status" value="1"/>
</dbReference>
<dbReference type="SUPFAM" id="SSF51690">
    <property type="entry name" value="Nicotinate/Quinolinate PRTase C-terminal domain-like"/>
    <property type="match status" value="1"/>
</dbReference>
<dbReference type="SUPFAM" id="SSF54675">
    <property type="entry name" value="Nicotinate/Quinolinate PRTase N-terminal domain-like"/>
    <property type="match status" value="1"/>
</dbReference>
<sequence length="400" mass="45911">MTQFASPVLHSLLDTDAYKLHMQQAVFHHYYDVHVAAEFRCRGDDLLGIYADAIREQIQAMQHLRLQDDEYQWLSALPFFKADYLNWLREFRFNPEQVTVSNDNGKLDIRLSGPWREVILWEVPLLAVISEMVHRYRSPQADVAQALDTLESKLVDFSALTAGLDMSRFHLMDFGTRRRFSREVQETIVKRLQQESWFVGTSNYDLARRLSLTPMGTQAHEWFQAHQQISPDLANSQRAALAAWLEEYPDQLGIALTDCITMDAFLRDFGVEFASRYQGLRHDSGDPVEWGEKAIAHYEKLGIDPQSKTLVFSDNLDLRKAVELYRHFSSRVQLSFGIGTRLTCDIPQVKPLNIVIKLVECNGKPVAKLSDSPGKTICHDKAFVRALRKAFDLPHIKKAS</sequence>
<gene>
    <name evidence="1" type="primary">pncB</name>
    <name type="ordered locus">ECSE_0991</name>
</gene>